<protein>
    <recommendedName>
        <fullName evidence="1">Histidinol-phosphate aminotransferase</fullName>
        <ecNumber evidence="1">2.6.1.9</ecNumber>
    </recommendedName>
    <alternativeName>
        <fullName evidence="1">Imidazole acetol-phosphate transaminase</fullName>
    </alternativeName>
</protein>
<reference key="1">
    <citation type="submission" date="2007-08" db="EMBL/GenBank/DDBJ databases">
        <authorList>
            <consortium name="The Vibrio harveyi Genome Sequencing Project"/>
            <person name="Bassler B."/>
            <person name="Clifton S.W."/>
            <person name="Fulton L."/>
            <person name="Delehaunty K."/>
            <person name="Fronick C."/>
            <person name="Harrison M."/>
            <person name="Markivic C."/>
            <person name="Fulton R."/>
            <person name="Tin-Wollam A.-M."/>
            <person name="Shah N."/>
            <person name="Pepin K."/>
            <person name="Nash W."/>
            <person name="Thiruvilangam P."/>
            <person name="Bhonagiri V."/>
            <person name="Waters C."/>
            <person name="Tu K.C."/>
            <person name="Irgon J."/>
            <person name="Wilson R.K."/>
        </authorList>
    </citation>
    <scope>NUCLEOTIDE SEQUENCE [LARGE SCALE GENOMIC DNA]</scope>
    <source>
        <strain>ATCC BAA-1116 / BB120</strain>
    </source>
</reference>
<organism>
    <name type="scientific">Vibrio campbellii (strain ATCC BAA-1116)</name>
    <dbReference type="NCBI Taxonomy" id="2902295"/>
    <lineage>
        <taxon>Bacteria</taxon>
        <taxon>Pseudomonadati</taxon>
        <taxon>Pseudomonadota</taxon>
        <taxon>Gammaproteobacteria</taxon>
        <taxon>Vibrionales</taxon>
        <taxon>Vibrionaceae</taxon>
        <taxon>Vibrio</taxon>
    </lineage>
</organism>
<proteinExistence type="inferred from homology"/>
<comment type="catalytic activity">
    <reaction evidence="1">
        <text>L-histidinol phosphate + 2-oxoglutarate = 3-(imidazol-4-yl)-2-oxopropyl phosphate + L-glutamate</text>
        <dbReference type="Rhea" id="RHEA:23744"/>
        <dbReference type="ChEBI" id="CHEBI:16810"/>
        <dbReference type="ChEBI" id="CHEBI:29985"/>
        <dbReference type="ChEBI" id="CHEBI:57766"/>
        <dbReference type="ChEBI" id="CHEBI:57980"/>
        <dbReference type="EC" id="2.6.1.9"/>
    </reaction>
</comment>
<comment type="cofactor">
    <cofactor evidence="1">
        <name>pyridoxal 5'-phosphate</name>
        <dbReference type="ChEBI" id="CHEBI:597326"/>
    </cofactor>
</comment>
<comment type="pathway">
    <text evidence="1">Amino-acid biosynthesis; L-histidine biosynthesis; L-histidine from 5-phospho-alpha-D-ribose 1-diphosphate: step 7/9.</text>
</comment>
<comment type="subunit">
    <text evidence="1">Homodimer.</text>
</comment>
<comment type="similarity">
    <text evidence="1">Belongs to the class-II pyridoxal-phosphate-dependent aminotransferase family. Histidinol-phosphate aminotransferase subfamily.</text>
</comment>
<accession>A7MX17</accession>
<gene>
    <name evidence="1" type="primary">hisC</name>
    <name type="ordered locus">VIBHAR_01832</name>
</gene>
<dbReference type="EC" id="2.6.1.9" evidence="1"/>
<dbReference type="EMBL" id="CP000789">
    <property type="protein sequence ID" value="ABU70801.1"/>
    <property type="molecule type" value="Genomic_DNA"/>
</dbReference>
<dbReference type="RefSeq" id="WP_012127626.1">
    <property type="nucleotide sequence ID" value="NC_009783.1"/>
</dbReference>
<dbReference type="SMR" id="A7MX17"/>
<dbReference type="KEGG" id="vha:VIBHAR_01832"/>
<dbReference type="PATRIC" id="fig|338187.25.peg.844"/>
<dbReference type="UniPathway" id="UPA00031">
    <property type="reaction ID" value="UER00012"/>
</dbReference>
<dbReference type="Proteomes" id="UP000008152">
    <property type="component" value="Chromosome I"/>
</dbReference>
<dbReference type="GO" id="GO:0004400">
    <property type="term" value="F:histidinol-phosphate transaminase activity"/>
    <property type="evidence" value="ECO:0007669"/>
    <property type="project" value="UniProtKB-UniRule"/>
</dbReference>
<dbReference type="GO" id="GO:0030170">
    <property type="term" value="F:pyridoxal phosphate binding"/>
    <property type="evidence" value="ECO:0007669"/>
    <property type="project" value="InterPro"/>
</dbReference>
<dbReference type="GO" id="GO:0000105">
    <property type="term" value="P:L-histidine biosynthetic process"/>
    <property type="evidence" value="ECO:0007669"/>
    <property type="project" value="UniProtKB-UniRule"/>
</dbReference>
<dbReference type="CDD" id="cd00609">
    <property type="entry name" value="AAT_like"/>
    <property type="match status" value="1"/>
</dbReference>
<dbReference type="Gene3D" id="3.90.1150.10">
    <property type="entry name" value="Aspartate Aminotransferase, domain 1"/>
    <property type="match status" value="1"/>
</dbReference>
<dbReference type="Gene3D" id="3.40.640.10">
    <property type="entry name" value="Type I PLP-dependent aspartate aminotransferase-like (Major domain)"/>
    <property type="match status" value="1"/>
</dbReference>
<dbReference type="HAMAP" id="MF_01023">
    <property type="entry name" value="HisC_aminotrans_2"/>
    <property type="match status" value="1"/>
</dbReference>
<dbReference type="InterPro" id="IPR001917">
    <property type="entry name" value="Aminotrans_II_pyridoxalP_BS"/>
</dbReference>
<dbReference type="InterPro" id="IPR004839">
    <property type="entry name" value="Aminotransferase_I/II_large"/>
</dbReference>
<dbReference type="InterPro" id="IPR005861">
    <property type="entry name" value="HisP_aminotrans"/>
</dbReference>
<dbReference type="InterPro" id="IPR015424">
    <property type="entry name" value="PyrdxlP-dep_Trfase"/>
</dbReference>
<dbReference type="InterPro" id="IPR015421">
    <property type="entry name" value="PyrdxlP-dep_Trfase_major"/>
</dbReference>
<dbReference type="InterPro" id="IPR015422">
    <property type="entry name" value="PyrdxlP-dep_Trfase_small"/>
</dbReference>
<dbReference type="NCBIfam" id="TIGR01141">
    <property type="entry name" value="hisC"/>
    <property type="match status" value="1"/>
</dbReference>
<dbReference type="PANTHER" id="PTHR42885:SF2">
    <property type="entry name" value="HISTIDINOL-PHOSPHATE AMINOTRANSFERASE"/>
    <property type="match status" value="1"/>
</dbReference>
<dbReference type="PANTHER" id="PTHR42885">
    <property type="entry name" value="HISTIDINOL-PHOSPHATE AMINOTRANSFERASE-RELATED"/>
    <property type="match status" value="1"/>
</dbReference>
<dbReference type="Pfam" id="PF00155">
    <property type="entry name" value="Aminotran_1_2"/>
    <property type="match status" value="1"/>
</dbReference>
<dbReference type="SUPFAM" id="SSF53383">
    <property type="entry name" value="PLP-dependent transferases"/>
    <property type="match status" value="1"/>
</dbReference>
<dbReference type="PROSITE" id="PS00599">
    <property type="entry name" value="AA_TRANSFER_CLASS_2"/>
    <property type="match status" value="1"/>
</dbReference>
<keyword id="KW-0028">Amino-acid biosynthesis</keyword>
<keyword id="KW-0032">Aminotransferase</keyword>
<keyword id="KW-0368">Histidine biosynthesis</keyword>
<keyword id="KW-0663">Pyridoxal phosphate</keyword>
<keyword id="KW-0808">Transferase</keyword>
<feature type="chain" id="PRO_1000063510" description="Histidinol-phosphate aminotransferase">
    <location>
        <begin position="1"/>
        <end position="346"/>
    </location>
</feature>
<feature type="modified residue" description="N6-(pyridoxal phosphate)lysine" evidence="1">
    <location>
        <position position="209"/>
    </location>
</feature>
<name>HIS8_VIBC1</name>
<sequence>MEKLARKQVQQLTPYLSARRIGGTGDVWLNANESPFNNEYKTDFARLNRYSECQPKELISAYAAYAGVKPEQTLTSRGADEGIELLIRAFCEPGEDAILYCPPTYGMYGISAETIGVERKTVPLTSDWQLELAGIEANLDNVKLVFVCSPNNPTGNLVKREDIVSLLEMTKDRAIVVMDEAYIDFCPEASTVDLLAQYPNLAILRTLSKAFALAGLRCGFTLANEELINVLLKVIAPYPVPVPVAEIATQALSEAGLARAKFQVLDLNANRAYLQVGLSMIPVLEVFEGWGNYLLVKFPDGDGLFKAAWETGIILRNSPIENCVRISVGNRDECEKTLGFIRNYYA</sequence>
<evidence type="ECO:0000255" key="1">
    <source>
        <dbReference type="HAMAP-Rule" id="MF_01023"/>
    </source>
</evidence>